<evidence type="ECO:0000255" key="1">
    <source>
        <dbReference type="HAMAP-Rule" id="MF_00354"/>
    </source>
</evidence>
<accession>Q67NT4</accession>
<sequence length="363" mass="38117">MDLRQQRKRDHVRLAAAWQERRPPPAAAGPGAGWEDVHLVNHSLPELALAEIDLTTSVAGVRLAQPVVINAMTGGADDVTAINRDLAAVAADLGLAMAVGSQTAGLRDPAVADSYRVVRRVNPKGIVLANVGSDATPEQARAAVEMVEADLLQIHLNAPQELRMPEGDRDFRGRLEAIARMVEEAPVPVVVKECGFGVSRDVAVLLHQAGVRAVDVSGRGGTNFAWIEDRRAGLSDPDPGLQNWGIPTACALAEVAALGLPELDLIASGGIRHGSDAAKALALGARAAAVAGPVLLRQQREGARGVMAYLQQFLTDLRAAMLLAGAGSVAAMGQVPVVVTGFTGEWCRLRGVDLMALANRSER</sequence>
<comment type="function">
    <text evidence="1">Involved in the biosynthesis of isoprenoids. Catalyzes the 1,3-allylic rearrangement of the homoallylic substrate isopentenyl (IPP) to its allylic isomer, dimethylallyl diphosphate (DMAPP).</text>
</comment>
<comment type="catalytic activity">
    <reaction evidence="1">
        <text>isopentenyl diphosphate = dimethylallyl diphosphate</text>
        <dbReference type="Rhea" id="RHEA:23284"/>
        <dbReference type="ChEBI" id="CHEBI:57623"/>
        <dbReference type="ChEBI" id="CHEBI:128769"/>
        <dbReference type="EC" id="5.3.3.2"/>
    </reaction>
</comment>
<comment type="cofactor">
    <cofactor evidence="1">
        <name>FMN</name>
        <dbReference type="ChEBI" id="CHEBI:58210"/>
    </cofactor>
</comment>
<comment type="cofactor">
    <cofactor evidence="1">
        <name>NADPH</name>
        <dbReference type="ChEBI" id="CHEBI:57783"/>
    </cofactor>
</comment>
<comment type="cofactor">
    <cofactor evidence="1">
        <name>Mg(2+)</name>
        <dbReference type="ChEBI" id="CHEBI:18420"/>
    </cofactor>
</comment>
<comment type="subunit">
    <text evidence="1">Homooctamer. Dimer of tetramers.</text>
</comment>
<comment type="subcellular location">
    <subcellularLocation>
        <location evidence="1">Cytoplasm</location>
    </subcellularLocation>
</comment>
<comment type="similarity">
    <text evidence="1">Belongs to the IPP isomerase type 2 family.</text>
</comment>
<dbReference type="EC" id="5.3.3.2" evidence="1"/>
<dbReference type="EMBL" id="AP006840">
    <property type="protein sequence ID" value="BAD40659.1"/>
    <property type="molecule type" value="Genomic_DNA"/>
</dbReference>
<dbReference type="RefSeq" id="WP_011195802.1">
    <property type="nucleotide sequence ID" value="NC_006177.1"/>
</dbReference>
<dbReference type="SMR" id="Q67NT4"/>
<dbReference type="STRING" id="292459.STH1674"/>
<dbReference type="KEGG" id="sth:STH1674"/>
<dbReference type="eggNOG" id="COG1304">
    <property type="taxonomic scope" value="Bacteria"/>
</dbReference>
<dbReference type="HOGENOM" id="CLU_065515_0_0_9"/>
<dbReference type="OrthoDB" id="9795032at2"/>
<dbReference type="Proteomes" id="UP000000417">
    <property type="component" value="Chromosome"/>
</dbReference>
<dbReference type="GO" id="GO:0005737">
    <property type="term" value="C:cytoplasm"/>
    <property type="evidence" value="ECO:0007669"/>
    <property type="project" value="UniProtKB-SubCell"/>
</dbReference>
<dbReference type="GO" id="GO:0010181">
    <property type="term" value="F:FMN binding"/>
    <property type="evidence" value="ECO:0007669"/>
    <property type="project" value="UniProtKB-UniRule"/>
</dbReference>
<dbReference type="GO" id="GO:0004452">
    <property type="term" value="F:isopentenyl-diphosphate delta-isomerase activity"/>
    <property type="evidence" value="ECO:0007669"/>
    <property type="project" value="UniProtKB-UniRule"/>
</dbReference>
<dbReference type="GO" id="GO:0000287">
    <property type="term" value="F:magnesium ion binding"/>
    <property type="evidence" value="ECO:0007669"/>
    <property type="project" value="UniProtKB-UniRule"/>
</dbReference>
<dbReference type="GO" id="GO:0070402">
    <property type="term" value="F:NADPH binding"/>
    <property type="evidence" value="ECO:0007669"/>
    <property type="project" value="UniProtKB-UniRule"/>
</dbReference>
<dbReference type="GO" id="GO:0016491">
    <property type="term" value="F:oxidoreductase activity"/>
    <property type="evidence" value="ECO:0007669"/>
    <property type="project" value="InterPro"/>
</dbReference>
<dbReference type="GO" id="GO:0008299">
    <property type="term" value="P:isoprenoid biosynthetic process"/>
    <property type="evidence" value="ECO:0007669"/>
    <property type="project" value="UniProtKB-UniRule"/>
</dbReference>
<dbReference type="CDD" id="cd02811">
    <property type="entry name" value="IDI-2_FMN"/>
    <property type="match status" value="1"/>
</dbReference>
<dbReference type="Gene3D" id="3.20.20.70">
    <property type="entry name" value="Aldolase class I"/>
    <property type="match status" value="1"/>
</dbReference>
<dbReference type="HAMAP" id="MF_00354">
    <property type="entry name" value="Idi_2"/>
    <property type="match status" value="1"/>
</dbReference>
<dbReference type="InterPro" id="IPR013785">
    <property type="entry name" value="Aldolase_TIM"/>
</dbReference>
<dbReference type="InterPro" id="IPR000262">
    <property type="entry name" value="FMN-dep_DH"/>
</dbReference>
<dbReference type="InterPro" id="IPR011179">
    <property type="entry name" value="IPdP_isomerase"/>
</dbReference>
<dbReference type="NCBIfam" id="TIGR02151">
    <property type="entry name" value="IPP_isom_2"/>
    <property type="match status" value="1"/>
</dbReference>
<dbReference type="PANTHER" id="PTHR43665">
    <property type="entry name" value="ISOPENTENYL-DIPHOSPHATE DELTA-ISOMERASE"/>
    <property type="match status" value="1"/>
</dbReference>
<dbReference type="PANTHER" id="PTHR43665:SF1">
    <property type="entry name" value="ISOPENTENYL-DIPHOSPHATE DELTA-ISOMERASE"/>
    <property type="match status" value="1"/>
</dbReference>
<dbReference type="Pfam" id="PF01070">
    <property type="entry name" value="FMN_dh"/>
    <property type="match status" value="1"/>
</dbReference>
<dbReference type="PIRSF" id="PIRSF003314">
    <property type="entry name" value="IPP_isomerase"/>
    <property type="match status" value="1"/>
</dbReference>
<dbReference type="SMART" id="SM01240">
    <property type="entry name" value="IMPDH"/>
    <property type="match status" value="1"/>
</dbReference>
<dbReference type="SUPFAM" id="SSF51395">
    <property type="entry name" value="FMN-linked oxidoreductases"/>
    <property type="match status" value="1"/>
</dbReference>
<gene>
    <name evidence="1" type="primary">fni</name>
    <name type="ordered locus">STH1674</name>
</gene>
<feature type="chain" id="PRO_0000229514" description="Isopentenyl-diphosphate delta-isomerase">
    <location>
        <begin position="1"/>
        <end position="363"/>
    </location>
</feature>
<feature type="binding site" evidence="1">
    <location>
        <begin position="7"/>
        <end position="8"/>
    </location>
    <ligand>
        <name>substrate</name>
    </ligand>
</feature>
<feature type="binding site" evidence="1">
    <location>
        <begin position="71"/>
        <end position="73"/>
    </location>
    <ligand>
        <name>FMN</name>
        <dbReference type="ChEBI" id="CHEBI:58210"/>
    </ligand>
</feature>
<feature type="binding site" evidence="1">
    <location>
        <position position="101"/>
    </location>
    <ligand>
        <name>FMN</name>
        <dbReference type="ChEBI" id="CHEBI:58210"/>
    </ligand>
</feature>
<feature type="binding site" evidence="1">
    <location>
        <position position="130"/>
    </location>
    <ligand>
        <name>FMN</name>
        <dbReference type="ChEBI" id="CHEBI:58210"/>
    </ligand>
</feature>
<feature type="binding site" evidence="1">
    <location>
        <position position="160"/>
    </location>
    <ligand>
        <name>substrate</name>
    </ligand>
</feature>
<feature type="binding site" evidence="1">
    <location>
        <position position="161"/>
    </location>
    <ligand>
        <name>Mg(2+)</name>
        <dbReference type="ChEBI" id="CHEBI:18420"/>
    </ligand>
</feature>
<feature type="binding site" evidence="1">
    <location>
        <position position="192"/>
    </location>
    <ligand>
        <name>FMN</name>
        <dbReference type="ChEBI" id="CHEBI:58210"/>
    </ligand>
</feature>
<feature type="binding site" evidence="1">
    <location>
        <position position="217"/>
    </location>
    <ligand>
        <name>FMN</name>
        <dbReference type="ChEBI" id="CHEBI:58210"/>
    </ligand>
</feature>
<feature type="binding site" evidence="1">
    <location>
        <position position="222"/>
    </location>
    <ligand>
        <name>FMN</name>
        <dbReference type="ChEBI" id="CHEBI:58210"/>
    </ligand>
</feature>
<feature type="binding site" evidence="1">
    <location>
        <begin position="270"/>
        <end position="272"/>
    </location>
    <ligand>
        <name>FMN</name>
        <dbReference type="ChEBI" id="CHEBI:58210"/>
    </ligand>
</feature>
<feature type="binding site" evidence="1">
    <location>
        <begin position="291"/>
        <end position="292"/>
    </location>
    <ligand>
        <name>FMN</name>
        <dbReference type="ChEBI" id="CHEBI:58210"/>
    </ligand>
</feature>
<organism>
    <name type="scientific">Symbiobacterium thermophilum (strain DSM 24528 / JCM 14929 / IAM 14863 / T)</name>
    <dbReference type="NCBI Taxonomy" id="292459"/>
    <lineage>
        <taxon>Bacteria</taxon>
        <taxon>Bacillati</taxon>
        <taxon>Bacillota</taxon>
        <taxon>Clostridia</taxon>
        <taxon>Eubacteriales</taxon>
        <taxon>Symbiobacteriaceae</taxon>
        <taxon>Symbiobacterium</taxon>
    </lineage>
</organism>
<keyword id="KW-0963">Cytoplasm</keyword>
<keyword id="KW-0285">Flavoprotein</keyword>
<keyword id="KW-0288">FMN</keyword>
<keyword id="KW-0413">Isomerase</keyword>
<keyword id="KW-0414">Isoprene biosynthesis</keyword>
<keyword id="KW-0460">Magnesium</keyword>
<keyword id="KW-0479">Metal-binding</keyword>
<keyword id="KW-0521">NADP</keyword>
<keyword id="KW-1185">Reference proteome</keyword>
<protein>
    <recommendedName>
        <fullName evidence="1">Isopentenyl-diphosphate delta-isomerase</fullName>
        <shortName evidence="1">IPP isomerase</shortName>
        <ecNumber evidence="1">5.3.3.2</ecNumber>
    </recommendedName>
    <alternativeName>
        <fullName evidence="1">Isopentenyl diphosphate:dimethylallyl diphosphate isomerase</fullName>
    </alternativeName>
    <alternativeName>
        <fullName evidence="1">Isopentenyl pyrophosphate isomerase</fullName>
    </alternativeName>
    <alternativeName>
        <fullName evidence="1">Type 2 isopentenyl diphosphate isomerase</fullName>
        <shortName evidence="1">IDI-2</shortName>
    </alternativeName>
</protein>
<proteinExistence type="inferred from homology"/>
<reference key="1">
    <citation type="journal article" date="2004" name="Nucleic Acids Res.">
        <title>Genome sequence of Symbiobacterium thermophilum, an uncultivable bacterium that depends on microbial commensalism.</title>
        <authorList>
            <person name="Ueda K."/>
            <person name="Yamashita A."/>
            <person name="Ishikawa J."/>
            <person name="Shimada M."/>
            <person name="Watsuji T."/>
            <person name="Morimura K."/>
            <person name="Ikeda H."/>
            <person name="Hattori M."/>
            <person name="Beppu T."/>
        </authorList>
    </citation>
    <scope>NUCLEOTIDE SEQUENCE [LARGE SCALE GENOMIC DNA]</scope>
    <source>
        <strain>DSM 24528 / JCM 14929 / IAM 14863 / T</strain>
    </source>
</reference>
<name>IDI2_SYMTH</name>